<gene>
    <name evidence="1" type="primary">MPPE1</name>
    <name evidence="1" type="synonym">PGAP5</name>
</gene>
<protein>
    <recommendedName>
        <fullName evidence="1">Metallophosphoesterase 1</fullName>
        <ecNumber evidence="1">3.1.-.-</ecNumber>
    </recommendedName>
    <alternativeName>
        <fullName>Post-GPI attachment to proteins factor 5</fullName>
    </alternativeName>
</protein>
<keyword id="KW-0931">ER-Golgi transport</keyword>
<keyword id="KW-0337">GPI-anchor biosynthesis</keyword>
<keyword id="KW-0378">Hydrolase</keyword>
<keyword id="KW-0464">Manganese</keyword>
<keyword id="KW-0472">Membrane</keyword>
<keyword id="KW-0479">Metal-binding</keyword>
<keyword id="KW-0812">Transmembrane</keyword>
<keyword id="KW-1133">Transmembrane helix</keyword>
<keyword id="KW-0813">Transport</keyword>
<accession>C7G3A0</accession>
<reference key="1">
    <citation type="journal article" date="2009" name="Cell">
        <title>GPI glycan remodeling by PGAP5 regulates transport of GPI-anchored proteins from the ER to the Golgi.</title>
        <authorList>
            <person name="Fujita M."/>
            <person name="Maeda Y."/>
            <person name="Ra M."/>
            <person name="Yamaguchi Y."/>
            <person name="Taguchi R."/>
            <person name="Kinoshita T."/>
        </authorList>
    </citation>
    <scope>NUCLEOTIDE SEQUENCE [MRNA]</scope>
    <scope>FUNCTION</scope>
</reference>
<organism>
    <name type="scientific">Cricetulus griseus</name>
    <name type="common">Chinese hamster</name>
    <name type="synonym">Cricetulus barabensis griseus</name>
    <dbReference type="NCBI Taxonomy" id="10029"/>
    <lineage>
        <taxon>Eukaryota</taxon>
        <taxon>Metazoa</taxon>
        <taxon>Chordata</taxon>
        <taxon>Craniata</taxon>
        <taxon>Vertebrata</taxon>
        <taxon>Euteleostomi</taxon>
        <taxon>Mammalia</taxon>
        <taxon>Eutheria</taxon>
        <taxon>Euarchontoglires</taxon>
        <taxon>Glires</taxon>
        <taxon>Rodentia</taxon>
        <taxon>Myomorpha</taxon>
        <taxon>Muroidea</taxon>
        <taxon>Cricetidae</taxon>
        <taxon>Cricetinae</taxon>
        <taxon>Cricetulus</taxon>
    </lineage>
</organism>
<proteinExistence type="evidence at transcript level"/>
<sequence length="391" mass="45368">MALVRWRLRRGNFHLLSRVLLLKLTVVIISVLLFCEYFIYHLVIFQCHWPEVKTLAHGDRQKPVLKAMFLADTHLLGEIRGHWLDKLRREWQMERAFQTALWWLQPEVIFILGDIFDEGKWSTTEAWADDVQRFRKIFRHGSHVQLKVVIGNHDIGFHYQMSKYRIKRFEKVFSSERLFSWKGVNFVMVNSVAMEGDGCSICSEAEAELREISRKLNCSREVQGSSQCEGEQRLPFSAPVLLQHYPLYRASDANCSGEDAAPPEERNVPFEEKYDVLSREASQKLLWWLQPRLVLSGHTHSACEVLHPGGVPEVSVPSFSWRNRNNPSFIMGSLTSKDYALSKCYLPFEDRVLATYGAAAVFLVVLILAHLERLPSSFLFGWKLRKMHMRG</sequence>
<evidence type="ECO:0000250" key="1">
    <source>
        <dbReference type="UniProtKB" id="Q53F39"/>
    </source>
</evidence>
<evidence type="ECO:0000255" key="2"/>
<evidence type="ECO:0000269" key="3">
    <source>
    </source>
</evidence>
<evidence type="ECO:0000305" key="4"/>
<name>MPPE1_CRIGR</name>
<feature type="chain" id="PRO_0000395804" description="Metallophosphoesterase 1">
    <location>
        <begin position="1"/>
        <end position="391"/>
    </location>
</feature>
<feature type="transmembrane region" description="Helical" evidence="2">
    <location>
        <begin position="25"/>
        <end position="45"/>
    </location>
</feature>
<feature type="transmembrane region" description="Helical" evidence="2">
    <location>
        <begin position="352"/>
        <end position="372"/>
    </location>
</feature>
<feature type="binding site" evidence="1">
    <location>
        <position position="72"/>
    </location>
    <ligand>
        <name>a divalent metal cation</name>
        <dbReference type="ChEBI" id="CHEBI:60240"/>
        <label>2</label>
    </ligand>
</feature>
<feature type="binding site" evidence="1">
    <location>
        <position position="114"/>
    </location>
    <ligand>
        <name>a divalent metal cation</name>
        <dbReference type="ChEBI" id="CHEBI:60240"/>
        <label>1</label>
    </ligand>
</feature>
<feature type="binding site" evidence="1">
    <location>
        <position position="114"/>
    </location>
    <ligand>
        <name>a divalent metal cation</name>
        <dbReference type="ChEBI" id="CHEBI:60240"/>
        <label>2</label>
    </ligand>
</feature>
<feature type="binding site" evidence="1">
    <location>
        <position position="152"/>
    </location>
    <ligand>
        <name>a divalent metal cation</name>
        <dbReference type="ChEBI" id="CHEBI:60240"/>
        <label>1</label>
    </ligand>
</feature>
<feature type="binding site" evidence="1">
    <location>
        <position position="244"/>
    </location>
    <ligand>
        <name>a divalent metal cation</name>
        <dbReference type="ChEBI" id="CHEBI:60240"/>
        <label>1</label>
    </ligand>
</feature>
<feature type="binding site" evidence="1">
    <location>
        <position position="244"/>
    </location>
    <ligand>
        <name>a divalent metal cation</name>
        <dbReference type="ChEBI" id="CHEBI:60240"/>
        <label>2</label>
    </ligand>
</feature>
<feature type="binding site" evidence="1">
    <location>
        <position position="298"/>
    </location>
    <ligand>
        <name>a divalent metal cation</name>
        <dbReference type="ChEBI" id="CHEBI:60240"/>
        <label>1</label>
    </ligand>
</feature>
<feature type="binding site" evidence="1">
    <location>
        <position position="300"/>
    </location>
    <ligand>
        <name>a divalent metal cation</name>
        <dbReference type="ChEBI" id="CHEBI:60240"/>
        <label>2</label>
    </ligand>
</feature>
<comment type="function">
    <text evidence="1 3">Metallophosphoesterase that catalyzes the removal of a side-chain ethanolamine-phosphate (EtNP) from the second mannose of the GPI-anchor protein intermediate (By similarity). Participates in the glycan remodeling steps of GPI-anchor maturation to allow an efficient transport of GPI-anchor proteins from the endoplasmic reticulum to the Golgi (PubMed:19837036).</text>
</comment>
<comment type="cofactor">
    <cofactor evidence="1">
        <name>Mn(2+)</name>
        <dbReference type="ChEBI" id="CHEBI:29035"/>
    </cofactor>
    <text evidence="1">Binds 2 manganese ions per subunit.</text>
</comment>
<comment type="subunit">
    <text evidence="1">Interacts with GPI-anchor proteins (via the GPI portion). Interacts with TMED10.</text>
</comment>
<comment type="subcellular location">
    <subcellularLocation>
        <location evidence="1">Endoplasmic reticulum-Golgi intermediate compartment membrane</location>
        <topology evidence="2">Multi-pass membrane protein</topology>
    </subcellularLocation>
    <text evidence="1">Also localizes to endoplasmic reticulum exit site.</text>
</comment>
<comment type="similarity">
    <text evidence="4">Belongs to the metallophosphoesterase superfamily. MPPE1 family.</text>
</comment>
<dbReference type="EC" id="3.1.-.-" evidence="1"/>
<dbReference type="EMBL" id="AB490159">
    <property type="protein sequence ID" value="BAI23309.1"/>
    <property type="molecule type" value="mRNA"/>
</dbReference>
<dbReference type="RefSeq" id="NP_001233645.1">
    <property type="nucleotide sequence ID" value="NM_001246716.1"/>
</dbReference>
<dbReference type="RefSeq" id="XP_007643621.1">
    <property type="nucleotide sequence ID" value="XM_007645431.1"/>
</dbReference>
<dbReference type="SMR" id="C7G3A0"/>
<dbReference type="PaxDb" id="10029-NP_001233645.1"/>
<dbReference type="Ensembl" id="ENSCGRT00001029832.1">
    <property type="protein sequence ID" value="ENSCGRP00001025586.1"/>
    <property type="gene ID" value="ENSCGRG00001023143.1"/>
</dbReference>
<dbReference type="GeneID" id="100689457"/>
<dbReference type="KEGG" id="cge:100689457"/>
<dbReference type="CTD" id="65258"/>
<dbReference type="eggNOG" id="KOG3662">
    <property type="taxonomic scope" value="Eukaryota"/>
</dbReference>
<dbReference type="GeneTree" id="ENSGT00390000013236"/>
<dbReference type="OMA" id="LHCMKYP"/>
<dbReference type="OrthoDB" id="9984693at2759"/>
<dbReference type="Proteomes" id="UP000694386">
    <property type="component" value="Unplaced"/>
</dbReference>
<dbReference type="Proteomes" id="UP001108280">
    <property type="component" value="Chromosome 2"/>
</dbReference>
<dbReference type="GO" id="GO:0070971">
    <property type="term" value="C:endoplasmic reticulum exit site"/>
    <property type="evidence" value="ECO:0000314"/>
    <property type="project" value="UniProtKB"/>
</dbReference>
<dbReference type="GO" id="GO:0033116">
    <property type="term" value="C:endoplasmic reticulum-Golgi intermediate compartment membrane"/>
    <property type="evidence" value="ECO:0007669"/>
    <property type="project" value="UniProtKB-SubCell"/>
</dbReference>
<dbReference type="GO" id="GO:0005794">
    <property type="term" value="C:Golgi apparatus"/>
    <property type="evidence" value="ECO:0007669"/>
    <property type="project" value="UniProtKB-SubCell"/>
</dbReference>
<dbReference type="GO" id="GO:0005654">
    <property type="term" value="C:nucleoplasm"/>
    <property type="evidence" value="ECO:0007669"/>
    <property type="project" value="Ensembl"/>
</dbReference>
<dbReference type="GO" id="GO:0034235">
    <property type="term" value="F:GPI anchor binding"/>
    <property type="evidence" value="ECO:0000314"/>
    <property type="project" value="UniProtKB"/>
</dbReference>
<dbReference type="GO" id="GO:0062050">
    <property type="term" value="F:GPI-mannose ethanolamine phosphate phosphodiesterase activity"/>
    <property type="evidence" value="ECO:0000314"/>
    <property type="project" value="UniProtKB"/>
</dbReference>
<dbReference type="GO" id="GO:0030145">
    <property type="term" value="F:manganese ion binding"/>
    <property type="evidence" value="ECO:0000314"/>
    <property type="project" value="UniProtKB"/>
</dbReference>
<dbReference type="GO" id="GO:0006888">
    <property type="term" value="P:endoplasmic reticulum to Golgi vesicle-mediated transport"/>
    <property type="evidence" value="ECO:0000315"/>
    <property type="project" value="UniProtKB"/>
</dbReference>
<dbReference type="GO" id="GO:0006506">
    <property type="term" value="P:GPI anchor biosynthetic process"/>
    <property type="evidence" value="ECO:0000315"/>
    <property type="project" value="UniProtKB"/>
</dbReference>
<dbReference type="CDD" id="cd08165">
    <property type="entry name" value="MPP_MPPE1"/>
    <property type="match status" value="1"/>
</dbReference>
<dbReference type="FunFam" id="3.60.21.10:FF:000022">
    <property type="entry name" value="Putative metallophosphoesterase 1"/>
    <property type="match status" value="1"/>
</dbReference>
<dbReference type="Gene3D" id="3.60.21.10">
    <property type="match status" value="1"/>
</dbReference>
<dbReference type="InterPro" id="IPR004843">
    <property type="entry name" value="Calcineurin-like_PHP_ApaH"/>
</dbReference>
<dbReference type="InterPro" id="IPR029052">
    <property type="entry name" value="Metallo-depent_PP-like"/>
</dbReference>
<dbReference type="InterPro" id="IPR039541">
    <property type="entry name" value="MPP_MPPE1"/>
</dbReference>
<dbReference type="InterPro" id="IPR033308">
    <property type="entry name" value="PGAP5/Cdc1/Ted1"/>
</dbReference>
<dbReference type="PANTHER" id="PTHR13315">
    <property type="entry name" value="METALLO PHOSPHOESTERASE RELATED"/>
    <property type="match status" value="1"/>
</dbReference>
<dbReference type="PANTHER" id="PTHR13315:SF0">
    <property type="entry name" value="METALLOPHOSPHOESTERASE 1"/>
    <property type="match status" value="1"/>
</dbReference>
<dbReference type="Pfam" id="PF00149">
    <property type="entry name" value="Metallophos"/>
    <property type="match status" value="1"/>
</dbReference>
<dbReference type="SUPFAM" id="SSF56300">
    <property type="entry name" value="Metallo-dependent phosphatases"/>
    <property type="match status" value="1"/>
</dbReference>